<sequence>MTDLHTDVERYLRYLSVERQLSPITLLNYQRQLEAIINFASENGLQSWQQCDVTMVRNFAVRSRRKGLGAASLALRLSALRSFFDWLVSQNELKANPAKGVSAPKAPRHLPKNIDVDDMNRLLDIDINDPLAVRDRAMLEVMYGAGLRLSELVGLDIKHLDLESGEVWVMGKGSKERRLPIGRNAVAWIEHWLDLRDLFGSEDDALFLSKLGKRISARNVQKRFAEWGIKQGLNNHVHPHKLRHSFATHMLESSGDLRGVQELLGHANLSTTQIYTHLDFQHLASVYDAAHPRAKRGK</sequence>
<gene>
    <name type="primary">xerC</name>
    <name type="ordered locus">b3811</name>
    <name type="ordered locus">JW3784</name>
</gene>
<organism>
    <name type="scientific">Escherichia coli (strain K12)</name>
    <dbReference type="NCBI Taxonomy" id="83333"/>
    <lineage>
        <taxon>Bacteria</taxon>
        <taxon>Pseudomonadati</taxon>
        <taxon>Pseudomonadota</taxon>
        <taxon>Gammaproteobacteria</taxon>
        <taxon>Enterobacterales</taxon>
        <taxon>Enterobacteriaceae</taxon>
        <taxon>Escherichia</taxon>
    </lineage>
</organism>
<reference key="1">
    <citation type="journal article" date="1990" name="J. Bacteriol.">
        <title>Recombination at ColE1 cer requires the Escherichia coli xerC gene product, a member of the lambda integrase family of site-specific recombinases.</title>
        <authorList>
            <person name="Colloms S.D."/>
            <person name="Sykora P."/>
            <person name="Szatmari G."/>
            <person name="Sherratt D.J."/>
        </authorList>
    </citation>
    <scope>NUCLEOTIDE SEQUENCE [GENOMIC DNA]</scope>
    <scope>PROTEIN SEQUENCE OF 1-20</scope>
    <source>
        <strain>K12</strain>
    </source>
</reference>
<reference key="2">
    <citation type="journal article" date="1992" name="Science">
        <title>Analysis of the Escherichia coli genome: DNA sequence of the region from 84.5 to 86.5 minutes.</title>
        <authorList>
            <person name="Daniels D.L."/>
            <person name="Plunkett G. III"/>
            <person name="Burland V.D."/>
            <person name="Blattner F.R."/>
        </authorList>
    </citation>
    <scope>NUCLEOTIDE SEQUENCE [LARGE SCALE GENOMIC DNA]</scope>
    <source>
        <strain>K12 / MG1655 / ATCC 47076</strain>
    </source>
</reference>
<reference key="3">
    <citation type="journal article" date="1997" name="Science">
        <title>The complete genome sequence of Escherichia coli K-12.</title>
        <authorList>
            <person name="Blattner F.R."/>
            <person name="Plunkett G. III"/>
            <person name="Bloch C.A."/>
            <person name="Perna N.T."/>
            <person name="Burland V."/>
            <person name="Riley M."/>
            <person name="Collado-Vides J."/>
            <person name="Glasner J.D."/>
            <person name="Rode C.K."/>
            <person name="Mayhew G.F."/>
            <person name="Gregor J."/>
            <person name="Davis N.W."/>
            <person name="Kirkpatrick H.A."/>
            <person name="Goeden M.A."/>
            <person name="Rose D.J."/>
            <person name="Mau B."/>
            <person name="Shao Y."/>
        </authorList>
    </citation>
    <scope>NUCLEOTIDE SEQUENCE [LARGE SCALE GENOMIC DNA]</scope>
    <scope>SEQUENCE REVISION TO 184-185</scope>
    <source>
        <strain>K12 / MG1655 / ATCC 47076</strain>
    </source>
</reference>
<reference key="4">
    <citation type="journal article" date="2006" name="Mol. Syst. Biol.">
        <title>Highly accurate genome sequences of Escherichia coli K-12 strains MG1655 and W3110.</title>
        <authorList>
            <person name="Hayashi K."/>
            <person name="Morooka N."/>
            <person name="Yamamoto Y."/>
            <person name="Fujita K."/>
            <person name="Isono K."/>
            <person name="Choi S."/>
            <person name="Ohtsubo E."/>
            <person name="Baba T."/>
            <person name="Wanner B.L."/>
            <person name="Mori H."/>
            <person name="Horiuchi T."/>
        </authorList>
    </citation>
    <scope>NUCLEOTIDE SEQUENCE [LARGE SCALE GENOMIC DNA]</scope>
    <source>
        <strain>K12 / W3110 / ATCC 27325 / DSM 5911</strain>
    </source>
</reference>
<reference key="5">
    <citation type="journal article" date="1993" name="Cell">
        <title>Two related recombinases are required for site-specific recombination at dif and cer in E. coli K12.</title>
        <authorList>
            <person name="Blakely G."/>
            <person name="May G."/>
            <person name="McCulloch R."/>
            <person name="Arciszewska L.K."/>
            <person name="Burke M."/>
            <person name="Lovett S.T."/>
            <person name="Sherratt D.J."/>
        </authorList>
    </citation>
    <scope>CHARACTERIZATION</scope>
    <scope>MUTAGENESIS OF TYR-275</scope>
    <source>
        <strain>K12 / DS941</strain>
    </source>
</reference>
<reference key="6">
    <citation type="journal article" date="1995" name="EMBO J.">
        <title>Xer site-specific recombination in vitro.</title>
        <authorList>
            <person name="Arciszewska L.K."/>
            <person name="Sherratt D.J."/>
        </authorList>
    </citation>
    <scope>FUNCTION</scope>
    <scope>MUTAGENESIS OF ARG-243 AND TYR-275</scope>
    <source>
        <strain>K12 / DS941</strain>
    </source>
</reference>
<reference key="7">
    <citation type="journal article" date="1997" name="J. Biol. Chem.">
        <title>Xer recombination in Escherichia coli. Site-specific DNA topoisomerase activity of the XerC and XerD recombinases.</title>
        <authorList>
            <person name="Cornet F."/>
            <person name="Hallet B."/>
            <person name="Sherratt D.J."/>
        </authorList>
    </citation>
    <scope>FUNCTION</scope>
    <scope>MUTAGENESIS OF TYR-275</scope>
</reference>
<reference key="8">
    <citation type="journal article" date="1999" name="Mol. Microbiol.">
        <title>C-terminal interactions between the XerC and XerD site-specific recombinases.</title>
        <authorList>
            <person name="Spiers A.J."/>
            <person name="Sherratt D.J."/>
        </authorList>
    </citation>
    <scope>INTERACTION WITH XERC</scope>
    <source>
        <strain>K12 / DS941</strain>
    </source>
</reference>
<reference key="9">
    <citation type="journal article" date="1999" name="J. Biol. Chem.">
        <title>Xer site-specific recombination. DNA strand rejoining by recombinase XerC.</title>
        <authorList>
            <person name="Grainge I."/>
            <person name="Sherratt D.J."/>
        </authorList>
    </citation>
    <scope>FUNCTION</scope>
</reference>
<reference key="10">
    <citation type="journal article" date="1999" name="Mol. Cell">
        <title>Reciprocal control of catalysis by the tyrosine recombinases XerC and XerD: an enzymatic switch in site-specific recombination.</title>
        <authorList>
            <person name="Hallet B."/>
            <person name="Arciszewska L.K."/>
            <person name="Sherratt D.J."/>
        </authorList>
    </citation>
    <scope>ACTIVITY REGULATION</scope>
    <scope>MUTAGENESIS OF 252-GLU--SER-254</scope>
    <source>
        <strain>K12 / DS941</strain>
    </source>
</reference>
<reference key="11">
    <citation type="journal article" date="2002" name="Cell">
        <title>FtsK is a DNA motor protein that activates chromosome dimer resolution by switching the catalytic state of the XerC and XerD recombinases.</title>
        <authorList>
            <person name="Aussel L."/>
            <person name="Barre F.-X."/>
            <person name="Aroyo M."/>
            <person name="Stasiak A."/>
            <person name="Stasiak A.Z."/>
            <person name="Sherratt D.J."/>
        </authorList>
    </citation>
    <scope>ACTIVITY REGULATION BY FTSK</scope>
</reference>
<dbReference type="EMBL" id="M38257">
    <property type="protein sequence ID" value="AAA24763.1"/>
    <property type="molecule type" value="Genomic_DNA"/>
</dbReference>
<dbReference type="EMBL" id="M87049">
    <property type="protein sequence ID" value="AAA67607.1"/>
    <property type="molecule type" value="Genomic_DNA"/>
</dbReference>
<dbReference type="EMBL" id="U00096">
    <property type="protein sequence ID" value="AAC76814.1"/>
    <property type="molecule type" value="Genomic_DNA"/>
</dbReference>
<dbReference type="EMBL" id="AP009048">
    <property type="protein sequence ID" value="BAE77489.1"/>
    <property type="molecule type" value="Genomic_DNA"/>
</dbReference>
<dbReference type="PIR" id="C37841">
    <property type="entry name" value="C37841"/>
</dbReference>
<dbReference type="RefSeq" id="NP_418256.1">
    <property type="nucleotide sequence ID" value="NC_000913.3"/>
</dbReference>
<dbReference type="RefSeq" id="WP_000130691.1">
    <property type="nucleotide sequence ID" value="NZ_SSZK01000025.1"/>
</dbReference>
<dbReference type="PDB" id="5DCF">
    <property type="method" value="X-ray"/>
    <property type="resolution" value="2.30 A"/>
    <property type="chains" value="A=111-298"/>
</dbReference>
<dbReference type="PDBsum" id="5DCF"/>
<dbReference type="SMR" id="P0A8P6"/>
<dbReference type="BioGRID" id="4263112">
    <property type="interactions" value="415"/>
</dbReference>
<dbReference type="BioGRID" id="852652">
    <property type="interactions" value="6"/>
</dbReference>
<dbReference type="ComplexPortal" id="CPX-5123">
    <property type="entry name" value="XerCD site-specific tyrosine recombinase complex"/>
</dbReference>
<dbReference type="DIP" id="DIP-726N"/>
<dbReference type="FunCoup" id="P0A8P6">
    <property type="interactions" value="59"/>
</dbReference>
<dbReference type="IntAct" id="P0A8P6">
    <property type="interactions" value="9"/>
</dbReference>
<dbReference type="STRING" id="511145.b3811"/>
<dbReference type="jPOST" id="P0A8P6"/>
<dbReference type="PaxDb" id="511145-b3811"/>
<dbReference type="EnsemblBacteria" id="AAC76814">
    <property type="protein sequence ID" value="AAC76814"/>
    <property type="gene ID" value="b3811"/>
</dbReference>
<dbReference type="GeneID" id="75059707"/>
<dbReference type="GeneID" id="948355"/>
<dbReference type="KEGG" id="ecj:JW3784"/>
<dbReference type="KEGG" id="eco:b3811"/>
<dbReference type="KEGG" id="ecoc:C3026_20630"/>
<dbReference type="PATRIC" id="fig|1411691.4.peg.2896"/>
<dbReference type="EchoBASE" id="EB1062"/>
<dbReference type="eggNOG" id="COG4973">
    <property type="taxonomic scope" value="Bacteria"/>
</dbReference>
<dbReference type="HOGENOM" id="CLU_027562_9_0_6"/>
<dbReference type="InParanoid" id="P0A8P6"/>
<dbReference type="OMA" id="AMMELMY"/>
<dbReference type="OrthoDB" id="9801717at2"/>
<dbReference type="PhylomeDB" id="P0A8P6"/>
<dbReference type="BioCyc" id="EcoCyc:EG11069-MONOMER"/>
<dbReference type="PRO" id="PR:P0A8P6"/>
<dbReference type="Proteomes" id="UP000000625">
    <property type="component" value="Chromosome"/>
</dbReference>
<dbReference type="GO" id="GO:0005737">
    <property type="term" value="C:cytoplasm"/>
    <property type="evidence" value="ECO:0007669"/>
    <property type="project" value="UniProtKB-SubCell"/>
</dbReference>
<dbReference type="GO" id="GO:0048476">
    <property type="term" value="C:Holliday junction resolvase complex"/>
    <property type="evidence" value="ECO:0000314"/>
    <property type="project" value="ComplexPortal"/>
</dbReference>
<dbReference type="GO" id="GO:0003677">
    <property type="term" value="F:DNA binding"/>
    <property type="evidence" value="ECO:0000314"/>
    <property type="project" value="EcoliWiki"/>
</dbReference>
<dbReference type="GO" id="GO:0009009">
    <property type="term" value="F:site-specific recombinase activity"/>
    <property type="evidence" value="ECO:0000314"/>
    <property type="project" value="EcoliWiki"/>
</dbReference>
<dbReference type="GO" id="GO:0009037">
    <property type="term" value="F:tyrosine-based site-specific recombinase activity"/>
    <property type="evidence" value="ECO:0000314"/>
    <property type="project" value="EcoliWiki"/>
</dbReference>
<dbReference type="GO" id="GO:0051301">
    <property type="term" value="P:cell division"/>
    <property type="evidence" value="ECO:0007669"/>
    <property type="project" value="UniProtKB-KW"/>
</dbReference>
<dbReference type="GO" id="GO:0007059">
    <property type="term" value="P:chromosome segregation"/>
    <property type="evidence" value="ECO:0000314"/>
    <property type="project" value="ComplexPortal"/>
</dbReference>
<dbReference type="GO" id="GO:0006310">
    <property type="term" value="P:DNA recombination"/>
    <property type="evidence" value="ECO:0000318"/>
    <property type="project" value="GO_Central"/>
</dbReference>
<dbReference type="GO" id="GO:0006313">
    <property type="term" value="P:DNA transposition"/>
    <property type="evidence" value="ECO:0007669"/>
    <property type="project" value="UniProtKB-UniRule"/>
</dbReference>
<dbReference type="GO" id="GO:0006276">
    <property type="term" value="P:plasmid maintenance"/>
    <property type="evidence" value="ECO:0000315"/>
    <property type="project" value="EcoliWiki"/>
</dbReference>
<dbReference type="GO" id="GO:0042150">
    <property type="term" value="P:plasmid recombination"/>
    <property type="evidence" value="ECO:0000315"/>
    <property type="project" value="EcoliWiki"/>
</dbReference>
<dbReference type="GO" id="GO:0071139">
    <property type="term" value="P:resolution of DNA recombination intermediates"/>
    <property type="evidence" value="ECO:0000314"/>
    <property type="project" value="ComplexPortal"/>
</dbReference>
<dbReference type="CDD" id="cd00798">
    <property type="entry name" value="INT_XerDC_C"/>
    <property type="match status" value="1"/>
</dbReference>
<dbReference type="FunFam" id="1.10.443.10:FF:000002">
    <property type="entry name" value="Tyrosine recombinase XerC"/>
    <property type="match status" value="1"/>
</dbReference>
<dbReference type="Gene3D" id="1.10.150.130">
    <property type="match status" value="1"/>
</dbReference>
<dbReference type="Gene3D" id="1.10.443.10">
    <property type="entry name" value="Intergrase catalytic core"/>
    <property type="match status" value="1"/>
</dbReference>
<dbReference type="HAMAP" id="MF_01808">
    <property type="entry name" value="Recomb_XerC_XerD"/>
    <property type="match status" value="1"/>
</dbReference>
<dbReference type="InterPro" id="IPR044068">
    <property type="entry name" value="CB"/>
</dbReference>
<dbReference type="InterPro" id="IPR011010">
    <property type="entry name" value="DNA_brk_join_enz"/>
</dbReference>
<dbReference type="InterPro" id="IPR013762">
    <property type="entry name" value="Integrase-like_cat_sf"/>
</dbReference>
<dbReference type="InterPro" id="IPR002104">
    <property type="entry name" value="Integrase_catalytic"/>
</dbReference>
<dbReference type="InterPro" id="IPR010998">
    <property type="entry name" value="Integrase_recombinase_N"/>
</dbReference>
<dbReference type="InterPro" id="IPR004107">
    <property type="entry name" value="Integrase_SAM-like_N"/>
</dbReference>
<dbReference type="InterPro" id="IPR011931">
    <property type="entry name" value="Recomb_XerC"/>
</dbReference>
<dbReference type="InterPro" id="IPR023009">
    <property type="entry name" value="Tyrosine_recombinase_XerC/XerD"/>
</dbReference>
<dbReference type="InterPro" id="IPR050090">
    <property type="entry name" value="Tyrosine_recombinase_XerCD"/>
</dbReference>
<dbReference type="NCBIfam" id="NF001399">
    <property type="entry name" value="PRK00283.1"/>
    <property type="match status" value="1"/>
</dbReference>
<dbReference type="NCBIfam" id="TIGR02224">
    <property type="entry name" value="recomb_XerC"/>
    <property type="match status" value="1"/>
</dbReference>
<dbReference type="PANTHER" id="PTHR30349">
    <property type="entry name" value="PHAGE INTEGRASE-RELATED"/>
    <property type="match status" value="1"/>
</dbReference>
<dbReference type="PANTHER" id="PTHR30349:SF81">
    <property type="entry name" value="TYROSINE RECOMBINASE XERC"/>
    <property type="match status" value="1"/>
</dbReference>
<dbReference type="Pfam" id="PF02899">
    <property type="entry name" value="Phage_int_SAM_1"/>
    <property type="match status" value="1"/>
</dbReference>
<dbReference type="Pfam" id="PF00589">
    <property type="entry name" value="Phage_integrase"/>
    <property type="match status" value="1"/>
</dbReference>
<dbReference type="SUPFAM" id="SSF56349">
    <property type="entry name" value="DNA breaking-rejoining enzymes"/>
    <property type="match status" value="1"/>
</dbReference>
<dbReference type="SUPFAM" id="SSF47823">
    <property type="entry name" value="lambda integrase-like, N-terminal domain"/>
    <property type="match status" value="1"/>
</dbReference>
<dbReference type="PROSITE" id="PS51900">
    <property type="entry name" value="CB"/>
    <property type="match status" value="1"/>
</dbReference>
<dbReference type="PROSITE" id="PS51898">
    <property type="entry name" value="TYR_RECOMBINASE"/>
    <property type="match status" value="1"/>
</dbReference>
<accession>P0A8P6</accession>
<accession>P22885</accession>
<accession>Q2M8B7</accession>
<keyword id="KW-0002">3D-structure</keyword>
<keyword id="KW-0131">Cell cycle</keyword>
<keyword id="KW-0132">Cell division</keyword>
<keyword id="KW-0159">Chromosome partition</keyword>
<keyword id="KW-0963">Cytoplasm</keyword>
<keyword id="KW-0903">Direct protein sequencing</keyword>
<keyword id="KW-0229">DNA integration</keyword>
<keyword id="KW-0233">DNA recombination</keyword>
<keyword id="KW-0238">DNA-binding</keyword>
<keyword id="KW-1185">Reference proteome</keyword>
<name>XERC_ECOLI</name>
<feature type="chain" id="PRO_0000095294" description="Tyrosine recombinase XerC">
    <location>
        <begin position="1"/>
        <end position="298"/>
    </location>
</feature>
<feature type="domain" description="Core-binding (CB)" evidence="3">
    <location>
        <begin position="2"/>
        <end position="88"/>
    </location>
</feature>
<feature type="domain" description="Tyr recombinase" evidence="2">
    <location>
        <begin position="109"/>
        <end position="288"/>
    </location>
</feature>
<feature type="active site" evidence="2">
    <location>
        <position position="148"/>
    </location>
</feature>
<feature type="active site" evidence="2">
    <location>
        <position position="172"/>
    </location>
</feature>
<feature type="active site" evidence="2">
    <location>
        <position position="240"/>
    </location>
</feature>
<feature type="active site" evidence="2">
    <location>
        <position position="243"/>
    </location>
</feature>
<feature type="active site" evidence="2">
    <location>
        <position position="266"/>
    </location>
</feature>
<feature type="active site" description="O-(3'-phospho-DNA)-tyrosine intermediate" evidence="2">
    <location>
        <position position="275"/>
    </location>
</feature>
<feature type="mutagenesis site" description="Abolishes DNA cleavage activity." evidence="8">
    <original>R</original>
    <variation>Q</variation>
    <location>
        <position position="243"/>
    </location>
</feature>
<feature type="mutagenesis site" description="Abolishes chromosomal recombination but not plasmid resolution." evidence="6">
    <original>ESS</original>
    <variation>NHG</variation>
    <location>
        <begin position="252"/>
        <end position="254"/>
    </location>
</feature>
<feature type="mutagenesis site" description="Abolishes DNA cleavage activity." evidence="8 9 10">
    <original>Y</original>
    <variation>F</variation>
    <location>
        <position position="275"/>
    </location>
</feature>
<feature type="sequence conflict" description="In Ref. 2; AAA67607." evidence="11" ref="2">
    <original>NA</original>
    <variation>KP</variation>
    <location>
        <begin position="184"/>
        <end position="185"/>
    </location>
</feature>
<feature type="helix" evidence="12">
    <location>
        <begin position="116"/>
        <end position="124"/>
    </location>
</feature>
<feature type="helix" evidence="12">
    <location>
        <begin position="130"/>
        <end position="145"/>
    </location>
</feature>
<feature type="helix" evidence="12">
    <location>
        <begin position="149"/>
        <end position="152"/>
    </location>
</feature>
<feature type="helix" evidence="12">
    <location>
        <begin position="157"/>
        <end position="159"/>
    </location>
</feature>
<feature type="turn" evidence="12">
    <location>
        <begin position="162"/>
        <end position="165"/>
    </location>
</feature>
<feature type="strand" evidence="12">
    <location>
        <begin position="166"/>
        <end position="170"/>
    </location>
</feature>
<feature type="helix" evidence="12">
    <location>
        <begin position="172"/>
        <end position="174"/>
    </location>
</feature>
<feature type="strand" evidence="12">
    <location>
        <begin position="176"/>
        <end position="180"/>
    </location>
</feature>
<feature type="helix" evidence="12">
    <location>
        <begin position="183"/>
        <end position="198"/>
    </location>
</feature>
<feature type="strand" evidence="12">
    <location>
        <begin position="205"/>
        <end position="208"/>
    </location>
</feature>
<feature type="strand" evidence="12">
    <location>
        <begin position="212"/>
        <end position="214"/>
    </location>
</feature>
<feature type="helix" evidence="12">
    <location>
        <begin position="217"/>
        <end position="230"/>
    </location>
</feature>
<feature type="helix" evidence="12">
    <location>
        <begin position="239"/>
        <end position="253"/>
    </location>
</feature>
<feature type="helix" evidence="12">
    <location>
        <begin position="258"/>
        <end position="264"/>
    </location>
</feature>
<feature type="helix" evidence="12">
    <location>
        <begin position="271"/>
        <end position="287"/>
    </location>
</feature>
<comment type="function">
    <text evidence="1 4 8 10">Site-specific tyrosine recombinase, which acts by catalyzing the cutting and rejoining of the recombining DNA molecules. Binds cooperatively to specific DNA consensus sequences that are separated from XerD binding sites by a short central region, forming the heterotetrameric XerC-XerD complex that recombines DNA substrates. The complex is essential to convert dimers of the bacterial chromosome into monomers to permit their segregation at cell division. It also contributes to the segregational stability of plasmids at ColE1 xer (or cer) and pSC101 (or psi) sites. In the complex XerC specifically exchanges the top DNA strands (By similarity).</text>
</comment>
<comment type="activity regulation">
    <text evidence="6 7">During recombination, the heterotetrameric complex catalyzes two consecutive pairs of strand exchanges, implying that specific pairs of active sites are sequentially switched on and off in the recombinase tetramer to ensure that appropriate DNA strands will be exchanged at both reaction steps. FtsK plays a central role in this catalytic state switch that turns recombinase on and off reciprocally. The reciprocal C-terminal interaction between XerC and XerD may also participate in the enzymatic switch process.</text>
</comment>
<comment type="subunit">
    <text evidence="5">Forms a cyclic heterotetrameric complex composed of two molecules of XerC and two molecules of XerD, in which XerC interacts with XerD via its C-terminal region, XerD interacts with XerC via its C-terminal region and so on.</text>
</comment>
<comment type="interaction">
    <interactant intactId="EBI-1133806">
        <id>P0A8P6</id>
    </interactant>
    <interactant intactId="EBI-1113479">
        <id>P0A9E0</id>
        <label>araC</label>
    </interactant>
    <organismsDiffer>false</organismsDiffer>
    <experiments>3</experiments>
</comment>
<comment type="interaction">
    <interactant intactId="EBI-1133806">
        <id>P0A8P6</id>
    </interactant>
    <interactant intactId="EBI-9135212">
        <id>P77551</id>
        <label>rzpR</label>
    </interactant>
    <organismsDiffer>false</organismsDiffer>
    <experiments>2</experiments>
</comment>
<comment type="subcellular location">
    <subcellularLocation>
        <location>Cytoplasm</location>
    </subcellularLocation>
    <text>Associated with DNA.</text>
</comment>
<comment type="similarity">
    <text evidence="11">Belongs to the 'phage' integrase family. XerC subfamily.</text>
</comment>
<proteinExistence type="evidence at protein level"/>
<evidence type="ECO:0000250" key="1"/>
<evidence type="ECO:0000255" key="2">
    <source>
        <dbReference type="PROSITE-ProRule" id="PRU01246"/>
    </source>
</evidence>
<evidence type="ECO:0000255" key="3">
    <source>
        <dbReference type="PROSITE-ProRule" id="PRU01248"/>
    </source>
</evidence>
<evidence type="ECO:0000269" key="4">
    <source>
    </source>
</evidence>
<evidence type="ECO:0000269" key="5">
    <source>
    </source>
</evidence>
<evidence type="ECO:0000269" key="6">
    <source>
    </source>
</evidence>
<evidence type="ECO:0000269" key="7">
    <source>
    </source>
</evidence>
<evidence type="ECO:0000269" key="8">
    <source>
    </source>
</evidence>
<evidence type="ECO:0000269" key="9">
    <source>
    </source>
</evidence>
<evidence type="ECO:0000269" key="10">
    <source>
    </source>
</evidence>
<evidence type="ECO:0000305" key="11"/>
<evidence type="ECO:0007829" key="12">
    <source>
        <dbReference type="PDB" id="5DCF"/>
    </source>
</evidence>
<protein>
    <recommendedName>
        <fullName>Tyrosine recombinase XerC</fullName>
    </recommendedName>
</protein>